<protein>
    <recommendedName>
        <fullName>Probable histone deacetylase 19</fullName>
        <ecNumber>3.5.1.98</ecNumber>
    </recommendedName>
    <alternativeName>
        <fullName>RPD3 homolog</fullName>
    </alternativeName>
</protein>
<name>HDA19_MAIZE</name>
<sequence>MDPSSAGSGGNSLPSVGPDGQKRRVCYFYDPDVGNYYYGQGHPMKPHRIRMTHSLLARYGLLNQMQVYRPNPARERELCRFHAEEYINFLRSVTPETQQDQIRLLKRFNVGEECPVLDGLYSFCQTYAGASVGGAVKFNHGHDIAINWSGGLHHAKKCEASGFCYVNDIVLAILELLKHHERVLYVDIDIHHGDGVEEAFYTTDRVMTVSFHKFGDYFPGTGDIRDIGHSKGKYYSLNVPLDDGIDDESYQSLFKPIMGKVMEVFRPGAVVLQCGADSLSGDRLGCFNLSIKGHAECVRYMRSFNVPLLLLGGGGYTIRNVARCWCYETGVALGQEPEDKMPVNEYYEYFGPDYTLHVAPSNMENKNTRQQLDDIRSKLSKLRHAPSVHFQERVPDTEIPEQDEDQDDPDERHDPDSDMEVDDHKAVEESSRRSILGIKIKREFGENATRVQDGGRVASEHRGLEPMAEDIGSSKQAPQADASAMAIDEPSNVKNEPESSTKLQGQAAAYHKP</sequence>
<reference key="1">
    <citation type="journal article" date="1998" name="Mol. Gen. Genet.">
        <title>Identification and characterisation of an RPD3 homologue from maize (Zea mays L.) that is able to complement an rpd3 null mutant of Saccharomyces cerevisiae.</title>
        <authorList>
            <person name="Rossi V."/>
            <person name="Hartings H."/>
            <person name="Motto M."/>
        </authorList>
    </citation>
    <scope>NUCLEOTIDE SEQUENCE [MRNA]</scope>
    <source>
        <strain>cv. Wisconsin 22</strain>
    </source>
</reference>
<evidence type="ECO:0000250" key="1"/>
<evidence type="ECO:0000250" key="2">
    <source>
        <dbReference type="UniProtKB" id="O22446"/>
    </source>
</evidence>
<evidence type="ECO:0000250" key="3">
    <source>
        <dbReference type="UniProtKB" id="Q8GXJ1"/>
    </source>
</evidence>
<evidence type="ECO:0000256" key="4">
    <source>
        <dbReference type="SAM" id="MobiDB-lite"/>
    </source>
</evidence>
<evidence type="ECO:0000305" key="5"/>
<keyword id="KW-0156">Chromatin regulator</keyword>
<keyword id="KW-0378">Hydrolase</keyword>
<keyword id="KW-0479">Metal-binding</keyword>
<keyword id="KW-0539">Nucleus</keyword>
<keyword id="KW-1185">Reference proteome</keyword>
<keyword id="KW-0678">Repressor</keyword>
<keyword id="KW-0804">Transcription</keyword>
<keyword id="KW-0805">Transcription regulation</keyword>
<keyword id="KW-0862">Zinc</keyword>
<organism>
    <name type="scientific">Zea mays</name>
    <name type="common">Maize</name>
    <dbReference type="NCBI Taxonomy" id="4577"/>
    <lineage>
        <taxon>Eukaryota</taxon>
        <taxon>Viridiplantae</taxon>
        <taxon>Streptophyta</taxon>
        <taxon>Embryophyta</taxon>
        <taxon>Tracheophyta</taxon>
        <taxon>Spermatophyta</taxon>
        <taxon>Magnoliopsida</taxon>
        <taxon>Liliopsida</taxon>
        <taxon>Poales</taxon>
        <taxon>Poaceae</taxon>
        <taxon>PACMAD clade</taxon>
        <taxon>Panicoideae</taxon>
        <taxon>Andropogonodae</taxon>
        <taxon>Andropogoneae</taxon>
        <taxon>Tripsacinae</taxon>
        <taxon>Zea</taxon>
    </lineage>
</organism>
<proteinExistence type="evidence at transcript level"/>
<comment type="function">
    <text evidence="2">Responsible for the deacetylation of lysine residues on the N-terminal part of the core histones (H2A, H2B, H3 and H4). Histone deacetylation gives a tag for epigenetic repression and plays an important role in transcriptional regulation, cell cycle progression and developmental events. Histone deacetylases act via the formation of large multiprotein complexes.</text>
</comment>
<comment type="catalytic activity">
    <reaction>
        <text>N(6)-acetyl-L-lysyl-[histone] + H2O = L-lysyl-[histone] + acetate</text>
        <dbReference type="Rhea" id="RHEA:58196"/>
        <dbReference type="Rhea" id="RHEA-COMP:9845"/>
        <dbReference type="Rhea" id="RHEA-COMP:11338"/>
        <dbReference type="ChEBI" id="CHEBI:15377"/>
        <dbReference type="ChEBI" id="CHEBI:29969"/>
        <dbReference type="ChEBI" id="CHEBI:30089"/>
        <dbReference type="ChEBI" id="CHEBI:61930"/>
        <dbReference type="EC" id="3.5.1.98"/>
    </reaction>
</comment>
<comment type="cofactor">
    <cofactor evidence="3">
        <name>Zn(2+)</name>
        <dbReference type="ChEBI" id="CHEBI:29105"/>
    </cofactor>
    <text evidence="3">Binds 1 zinc ion per subunit.</text>
</comment>
<comment type="subcellular location">
    <subcellularLocation>
        <location evidence="1">Nucleus</location>
    </subcellularLocation>
</comment>
<comment type="similarity">
    <text evidence="5">Belongs to the histone deacetylase family. HD type 1 subfamily.</text>
</comment>
<dbReference type="EC" id="3.5.1.98"/>
<dbReference type="EMBL" id="AF035815">
    <property type="protein sequence ID" value="AAC50038.1"/>
    <property type="molecule type" value="mRNA"/>
</dbReference>
<dbReference type="PIR" id="T01413">
    <property type="entry name" value="T01413"/>
</dbReference>
<dbReference type="SMR" id="P56521"/>
<dbReference type="FunCoup" id="P56521">
    <property type="interactions" value="4173"/>
</dbReference>
<dbReference type="STRING" id="4577.P56521"/>
<dbReference type="PaxDb" id="4577-GRMZM2G172883_P01"/>
<dbReference type="MaizeGDB" id="2665840"/>
<dbReference type="eggNOG" id="KOG1342">
    <property type="taxonomic scope" value="Eukaryota"/>
</dbReference>
<dbReference type="InParanoid" id="P56521"/>
<dbReference type="Proteomes" id="UP000007305">
    <property type="component" value="Unplaced"/>
</dbReference>
<dbReference type="ExpressionAtlas" id="P56521">
    <property type="expression patterns" value="baseline and differential"/>
</dbReference>
<dbReference type="GO" id="GO:0005634">
    <property type="term" value="C:nucleus"/>
    <property type="evidence" value="ECO:0000318"/>
    <property type="project" value="GO_Central"/>
</dbReference>
<dbReference type="GO" id="GO:0004407">
    <property type="term" value="F:histone deacetylase activity"/>
    <property type="evidence" value="ECO:0000318"/>
    <property type="project" value="GO_Central"/>
</dbReference>
<dbReference type="GO" id="GO:0141221">
    <property type="term" value="F:histone deacetylase activity, hydrolytic mechanism"/>
    <property type="evidence" value="ECO:0007669"/>
    <property type="project" value="UniProtKB-EC"/>
</dbReference>
<dbReference type="GO" id="GO:0008270">
    <property type="term" value="F:zinc ion binding"/>
    <property type="evidence" value="ECO:0000250"/>
    <property type="project" value="UniProtKB"/>
</dbReference>
<dbReference type="GO" id="GO:0040029">
    <property type="term" value="P:epigenetic regulation of gene expression"/>
    <property type="evidence" value="ECO:0000318"/>
    <property type="project" value="GO_Central"/>
</dbReference>
<dbReference type="FunFam" id="3.40.800.20:FF:000001">
    <property type="entry name" value="Histone deacetylase"/>
    <property type="match status" value="1"/>
</dbReference>
<dbReference type="Gene3D" id="3.40.800.20">
    <property type="entry name" value="Histone deacetylase domain"/>
    <property type="match status" value="1"/>
</dbReference>
<dbReference type="InterPro" id="IPR050284">
    <property type="entry name" value="HDAC_PDAC"/>
</dbReference>
<dbReference type="InterPro" id="IPR000286">
    <property type="entry name" value="His_deacetylse"/>
</dbReference>
<dbReference type="InterPro" id="IPR003084">
    <property type="entry name" value="His_deacetylse_1"/>
</dbReference>
<dbReference type="InterPro" id="IPR023801">
    <property type="entry name" value="His_deacetylse_dom"/>
</dbReference>
<dbReference type="InterPro" id="IPR037138">
    <property type="entry name" value="His_deacetylse_dom_sf"/>
</dbReference>
<dbReference type="InterPro" id="IPR023696">
    <property type="entry name" value="Ureohydrolase_dom_sf"/>
</dbReference>
<dbReference type="PANTHER" id="PTHR10625:SF22">
    <property type="entry name" value="HISTONE DEACETYLASE 2"/>
    <property type="match status" value="1"/>
</dbReference>
<dbReference type="PANTHER" id="PTHR10625">
    <property type="entry name" value="HISTONE DEACETYLASE HDAC1-RELATED"/>
    <property type="match status" value="1"/>
</dbReference>
<dbReference type="Pfam" id="PF00850">
    <property type="entry name" value="Hist_deacetyl"/>
    <property type="match status" value="1"/>
</dbReference>
<dbReference type="PRINTS" id="PR01270">
    <property type="entry name" value="HDASUPER"/>
</dbReference>
<dbReference type="PRINTS" id="PR01271">
    <property type="entry name" value="HISDACETLASE"/>
</dbReference>
<dbReference type="SUPFAM" id="SSF52768">
    <property type="entry name" value="Arginase/deacetylase"/>
    <property type="match status" value="1"/>
</dbReference>
<accession>P56521</accession>
<feature type="chain" id="PRO_0000114722" description="Probable histone deacetylase 19">
    <location>
        <begin position="1"/>
        <end position="513"/>
    </location>
</feature>
<feature type="region of interest" description="Histone deacetylase">
    <location>
        <begin position="23"/>
        <end position="334"/>
    </location>
</feature>
<feature type="region of interest" description="Disordered" evidence="4">
    <location>
        <begin position="384"/>
        <end position="432"/>
    </location>
</feature>
<feature type="region of interest" description="Disordered" evidence="4">
    <location>
        <begin position="446"/>
        <end position="513"/>
    </location>
</feature>
<feature type="compositionally biased region" description="Acidic residues" evidence="4">
    <location>
        <begin position="398"/>
        <end position="409"/>
    </location>
</feature>
<feature type="compositionally biased region" description="Basic and acidic residues" evidence="4">
    <location>
        <begin position="410"/>
        <end position="432"/>
    </location>
</feature>
<feature type="compositionally biased region" description="Polar residues" evidence="4">
    <location>
        <begin position="492"/>
        <end position="504"/>
    </location>
</feature>
<feature type="active site" description="Proton donor/acceptor" evidence="3">
    <location>
        <position position="154"/>
    </location>
</feature>
<feature type="binding site" evidence="3">
    <location>
        <position position="189"/>
    </location>
    <ligand>
        <name>Zn(2+)</name>
        <dbReference type="ChEBI" id="CHEBI:29105"/>
    </ligand>
</feature>
<feature type="binding site" evidence="3">
    <location>
        <position position="191"/>
    </location>
    <ligand>
        <name>Zn(2+)</name>
        <dbReference type="ChEBI" id="CHEBI:29105"/>
    </ligand>
</feature>
<feature type="binding site" evidence="3">
    <location>
        <position position="277"/>
    </location>
    <ligand>
        <name>Zn(2+)</name>
        <dbReference type="ChEBI" id="CHEBI:29105"/>
    </ligand>
</feature>
<feature type="site" description="Polarizes the scissile carbonyl of the substrate" evidence="3">
    <location>
        <position position="316"/>
    </location>
</feature>